<sequence>MKVLAAMSGGVDSSVAAARMVDAGHEVVGVHMALSTAPGTLRTGSRGCCSKEDAADARRVADVLGIPFYVWDFAEKFKEDVINDFVSSYARGETPNPCVRCNQQIKFAALSARAVALGFDTVATGHYARLSGGRLRRAVDRDKDQSYVLAVLTAQQLRHAAFPIGDTPKRQIRAEAARRGLAVANKPDSHDICFIPSGNTKAFLGERIGVRRGVVVDADGVVLASHDGVHGFTIGQRRGLGIAGPGPNGRPRYVTAIDADTATVHVGDVTDLDVQTLTGRAPVFTAGAAPSGPVDCVVQVRAHGETVSAVAELIGDALFVQLHAPLRGVARGQTLVLYRPDPAGDEVLGSATIAGASGLSTGGNPGA</sequence>
<reference key="1">
    <citation type="journal article" date="2003" name="Proc. Natl. Acad. Sci. U.S.A.">
        <title>The complete genome sequence of Mycobacterium bovis.</title>
        <authorList>
            <person name="Garnier T."/>
            <person name="Eiglmeier K."/>
            <person name="Camus J.-C."/>
            <person name="Medina N."/>
            <person name="Mansoor H."/>
            <person name="Pryor M."/>
            <person name="Duthoy S."/>
            <person name="Grondin S."/>
            <person name="Lacroix C."/>
            <person name="Monsempe C."/>
            <person name="Simon S."/>
            <person name="Harris B."/>
            <person name="Atkin R."/>
            <person name="Doggett J."/>
            <person name="Mayes R."/>
            <person name="Keating L."/>
            <person name="Wheeler P.R."/>
            <person name="Parkhill J."/>
            <person name="Barrell B.G."/>
            <person name="Cole S.T."/>
            <person name="Gordon S.V."/>
            <person name="Hewinson R.G."/>
        </authorList>
    </citation>
    <scope>NUCLEOTIDE SEQUENCE [LARGE SCALE GENOMIC DNA]</scope>
    <source>
        <strain>ATCC BAA-935 / AF2122/97</strain>
    </source>
</reference>
<reference key="2">
    <citation type="journal article" date="2017" name="Genome Announc.">
        <title>Updated reference genome sequence and annotation of Mycobacterium bovis AF2122/97.</title>
        <authorList>
            <person name="Malone K.M."/>
            <person name="Farrell D."/>
            <person name="Stuber T.P."/>
            <person name="Schubert O.T."/>
            <person name="Aebersold R."/>
            <person name="Robbe-Austerman S."/>
            <person name="Gordon S.V."/>
        </authorList>
    </citation>
    <scope>NUCLEOTIDE SEQUENCE [LARGE SCALE GENOMIC DNA]</scope>
    <scope>GENOME REANNOTATION</scope>
    <source>
        <strain>ATCC BAA-935 / AF2122/97</strain>
    </source>
</reference>
<protein>
    <recommendedName>
        <fullName evidence="1">tRNA-specific 2-thiouridylase MnmA</fullName>
        <ecNumber evidence="1">2.8.1.13</ecNumber>
    </recommendedName>
</protein>
<name>MNMA_MYCBO</name>
<keyword id="KW-0067">ATP-binding</keyword>
<keyword id="KW-0963">Cytoplasm</keyword>
<keyword id="KW-1015">Disulfide bond</keyword>
<keyword id="KW-0547">Nucleotide-binding</keyword>
<keyword id="KW-1185">Reference proteome</keyword>
<keyword id="KW-0694">RNA-binding</keyword>
<keyword id="KW-0808">Transferase</keyword>
<keyword id="KW-0819">tRNA processing</keyword>
<keyword id="KW-0820">tRNA-binding</keyword>
<accession>P66977</accession>
<accession>A0A1R3Y2X4</accession>
<accession>O53271</accession>
<accession>X2BMG7</accession>
<comment type="function">
    <text evidence="1">Catalyzes the 2-thiolation of uridine at the wobble position (U34) of tRNA, leading to the formation of s(2)U34.</text>
</comment>
<comment type="catalytic activity">
    <reaction evidence="1">
        <text>S-sulfanyl-L-cysteinyl-[protein] + uridine(34) in tRNA + AH2 + ATP = 2-thiouridine(34) in tRNA + L-cysteinyl-[protein] + A + AMP + diphosphate + H(+)</text>
        <dbReference type="Rhea" id="RHEA:47032"/>
        <dbReference type="Rhea" id="RHEA-COMP:10131"/>
        <dbReference type="Rhea" id="RHEA-COMP:11726"/>
        <dbReference type="Rhea" id="RHEA-COMP:11727"/>
        <dbReference type="Rhea" id="RHEA-COMP:11728"/>
        <dbReference type="ChEBI" id="CHEBI:13193"/>
        <dbReference type="ChEBI" id="CHEBI:15378"/>
        <dbReference type="ChEBI" id="CHEBI:17499"/>
        <dbReference type="ChEBI" id="CHEBI:29950"/>
        <dbReference type="ChEBI" id="CHEBI:30616"/>
        <dbReference type="ChEBI" id="CHEBI:33019"/>
        <dbReference type="ChEBI" id="CHEBI:61963"/>
        <dbReference type="ChEBI" id="CHEBI:65315"/>
        <dbReference type="ChEBI" id="CHEBI:87170"/>
        <dbReference type="ChEBI" id="CHEBI:456215"/>
        <dbReference type="EC" id="2.8.1.13"/>
    </reaction>
</comment>
<comment type="subcellular location">
    <subcellularLocation>
        <location evidence="1">Cytoplasm</location>
    </subcellularLocation>
</comment>
<comment type="similarity">
    <text evidence="1">Belongs to the MnmA/TRMU family.</text>
</comment>
<organism>
    <name type="scientific">Mycobacterium bovis (strain ATCC BAA-935 / AF2122/97)</name>
    <dbReference type="NCBI Taxonomy" id="233413"/>
    <lineage>
        <taxon>Bacteria</taxon>
        <taxon>Bacillati</taxon>
        <taxon>Actinomycetota</taxon>
        <taxon>Actinomycetes</taxon>
        <taxon>Mycobacteriales</taxon>
        <taxon>Mycobacteriaceae</taxon>
        <taxon>Mycobacterium</taxon>
        <taxon>Mycobacterium tuberculosis complex</taxon>
    </lineage>
</organism>
<gene>
    <name evidence="1" type="primary">mnmA</name>
    <name type="synonym">trmU</name>
    <name type="ordered locus">BQ2027_MB3050C</name>
</gene>
<feature type="chain" id="PRO_0000121650" description="tRNA-specific 2-thiouridylase MnmA">
    <location>
        <begin position="1"/>
        <end position="367"/>
    </location>
</feature>
<feature type="region of interest" description="Interaction with tRNA" evidence="1">
    <location>
        <begin position="143"/>
        <end position="145"/>
    </location>
</feature>
<feature type="active site" description="Nucleophile" evidence="1">
    <location>
        <position position="101"/>
    </location>
</feature>
<feature type="active site" description="Cysteine persulfide intermediate" evidence="1">
    <location>
        <position position="193"/>
    </location>
</feature>
<feature type="binding site" evidence="1">
    <location>
        <begin position="6"/>
        <end position="13"/>
    </location>
    <ligand>
        <name>ATP</name>
        <dbReference type="ChEBI" id="CHEBI:30616"/>
    </ligand>
</feature>
<feature type="binding site" evidence="1">
    <location>
        <position position="32"/>
    </location>
    <ligand>
        <name>ATP</name>
        <dbReference type="ChEBI" id="CHEBI:30616"/>
    </ligand>
</feature>
<feature type="binding site" evidence="1">
    <location>
        <position position="125"/>
    </location>
    <ligand>
        <name>ATP</name>
        <dbReference type="ChEBI" id="CHEBI:30616"/>
    </ligand>
</feature>
<feature type="site" description="Interaction with tRNA" evidence="1">
    <location>
        <position position="126"/>
    </location>
</feature>
<feature type="site" description="Interaction with tRNA" evidence="1">
    <location>
        <position position="333"/>
    </location>
</feature>
<feature type="disulfide bond" description="Alternate" evidence="1">
    <location>
        <begin position="101"/>
        <end position="193"/>
    </location>
</feature>
<evidence type="ECO:0000255" key="1">
    <source>
        <dbReference type="HAMAP-Rule" id="MF_00144"/>
    </source>
</evidence>
<dbReference type="EC" id="2.8.1.13" evidence="1"/>
<dbReference type="EMBL" id="LT708304">
    <property type="protein sequence ID" value="SIU01674.1"/>
    <property type="molecule type" value="Genomic_DNA"/>
</dbReference>
<dbReference type="RefSeq" id="NP_856695.1">
    <property type="nucleotide sequence ID" value="NC_002945.3"/>
</dbReference>
<dbReference type="RefSeq" id="WP_003415909.1">
    <property type="nucleotide sequence ID" value="NC_002945.4"/>
</dbReference>
<dbReference type="SMR" id="P66977"/>
<dbReference type="KEGG" id="mbo:BQ2027_MB3050C"/>
<dbReference type="PATRIC" id="fig|233413.5.peg.3351"/>
<dbReference type="Proteomes" id="UP000001419">
    <property type="component" value="Chromosome"/>
</dbReference>
<dbReference type="GO" id="GO:0005737">
    <property type="term" value="C:cytoplasm"/>
    <property type="evidence" value="ECO:0007669"/>
    <property type="project" value="UniProtKB-SubCell"/>
</dbReference>
<dbReference type="GO" id="GO:0005524">
    <property type="term" value="F:ATP binding"/>
    <property type="evidence" value="ECO:0007669"/>
    <property type="project" value="UniProtKB-KW"/>
</dbReference>
<dbReference type="GO" id="GO:0000049">
    <property type="term" value="F:tRNA binding"/>
    <property type="evidence" value="ECO:0007669"/>
    <property type="project" value="UniProtKB-KW"/>
</dbReference>
<dbReference type="GO" id="GO:0103016">
    <property type="term" value="F:tRNA-uridine 2-sulfurtransferase activity"/>
    <property type="evidence" value="ECO:0007669"/>
    <property type="project" value="UniProtKB-EC"/>
</dbReference>
<dbReference type="GO" id="GO:0002143">
    <property type="term" value="P:tRNA wobble position uridine thiolation"/>
    <property type="evidence" value="ECO:0007669"/>
    <property type="project" value="TreeGrafter"/>
</dbReference>
<dbReference type="CDD" id="cd01998">
    <property type="entry name" value="MnmA_TRMU-like"/>
    <property type="match status" value="1"/>
</dbReference>
<dbReference type="FunFam" id="3.40.50.620:FF:000057">
    <property type="entry name" value="tRNA-specific 2-thiouridylase MnmA"/>
    <property type="match status" value="1"/>
</dbReference>
<dbReference type="Gene3D" id="2.30.30.280">
    <property type="entry name" value="Adenine nucleotide alpha hydrolases-like domains"/>
    <property type="match status" value="1"/>
</dbReference>
<dbReference type="Gene3D" id="3.40.50.620">
    <property type="entry name" value="HUPs"/>
    <property type="match status" value="1"/>
</dbReference>
<dbReference type="Gene3D" id="2.40.30.10">
    <property type="entry name" value="Translation factors"/>
    <property type="match status" value="1"/>
</dbReference>
<dbReference type="HAMAP" id="MF_00144">
    <property type="entry name" value="tRNA_thiouridyl_MnmA"/>
    <property type="match status" value="1"/>
</dbReference>
<dbReference type="InterPro" id="IPR004506">
    <property type="entry name" value="MnmA-like"/>
</dbReference>
<dbReference type="InterPro" id="IPR046885">
    <property type="entry name" value="MnmA-like_C"/>
</dbReference>
<dbReference type="InterPro" id="IPR046884">
    <property type="entry name" value="MnmA-like_central"/>
</dbReference>
<dbReference type="InterPro" id="IPR023382">
    <property type="entry name" value="MnmA-like_central_sf"/>
</dbReference>
<dbReference type="InterPro" id="IPR014729">
    <property type="entry name" value="Rossmann-like_a/b/a_fold"/>
</dbReference>
<dbReference type="NCBIfam" id="NF001138">
    <property type="entry name" value="PRK00143.1"/>
    <property type="match status" value="1"/>
</dbReference>
<dbReference type="NCBIfam" id="TIGR00420">
    <property type="entry name" value="trmU"/>
    <property type="match status" value="1"/>
</dbReference>
<dbReference type="PANTHER" id="PTHR11933:SF5">
    <property type="entry name" value="MITOCHONDRIAL TRNA-SPECIFIC 2-THIOURIDYLASE 1"/>
    <property type="match status" value="1"/>
</dbReference>
<dbReference type="PANTHER" id="PTHR11933">
    <property type="entry name" value="TRNA 5-METHYLAMINOMETHYL-2-THIOURIDYLATE -METHYLTRANSFERASE"/>
    <property type="match status" value="1"/>
</dbReference>
<dbReference type="Pfam" id="PF03054">
    <property type="entry name" value="tRNA_Me_trans"/>
    <property type="match status" value="1"/>
</dbReference>
<dbReference type="Pfam" id="PF20258">
    <property type="entry name" value="tRNA_Me_trans_C"/>
    <property type="match status" value="1"/>
</dbReference>
<dbReference type="Pfam" id="PF20259">
    <property type="entry name" value="tRNA_Me_trans_M"/>
    <property type="match status" value="1"/>
</dbReference>
<dbReference type="SUPFAM" id="SSF52402">
    <property type="entry name" value="Adenine nucleotide alpha hydrolases-like"/>
    <property type="match status" value="1"/>
</dbReference>
<proteinExistence type="inferred from homology"/>